<comment type="function">
    <text evidence="2 3 4 6">Highly selective magnesium channel that plays an important role in Mg(2+) homeostasis (PubMed:17700703, PubMed:19798051, PubMed:25367295, PubMed:33905418). Functions as a Mg(2+)-dependent gating channel (PubMed:19798051, PubMed:25367295, PubMed:33905418). Exhibits low activity with cobalt, suggesting that it might also be involved in the uptake of Co(2+) as a micronutrient (PubMed:19798051). Also exhibits low activity with Ca(2+), but it shows almost no activity with Mn(2+) (PubMed:25367295).</text>
</comment>
<comment type="catalytic activity">
    <reaction evidence="2 3 4 6">
        <text>Mg(2+)(in) = Mg(2+)(out)</text>
        <dbReference type="Rhea" id="RHEA:29827"/>
        <dbReference type="ChEBI" id="CHEBI:18420"/>
    </reaction>
</comment>
<comment type="activity regulation">
    <text evidence="3 4 5 6">The channel activity is regulated via the N-terminal cytoplasmic region, which acts as a Mg(2+) sensor to regulate the gating of the ion-conducting pore in response to the intracellular magnesium concentration (PubMed:19798051, PubMed:25367295, PubMed:33905418). Under high-intracellular magnesium conditions, binding of magnesium to the N-terminal cytoplasmic domain stabilizes the closed conformation of the channel (PubMed:19798051, PubMed:25367295, PubMed:33905418). Under low-intracellular magnesium conditions, the channel is in equilibrium between the open and closed states (PubMed:19798051). A cation-binding site within the membrane (M1) strictly recognizes the size and geometry of the Mg(2+) hydration shells, which may be important for the selective transport of Mg(2+) over other cations (PubMed:25367295). Cation-binding sites on the periplasmic side (M2 and M3) regulate channel opening and prevent conduction of near-cognate cations (PubMed:25367295). Binding of Mn(2+) to the periplasmic sites strongly inhibits the Mg(2+) transport activity (PubMed:25367295). In addition, activity is regulated by ATP, which binds to MgtE and modulates its Mg(2+)-dependent channel gating (PubMed:28747715). ATP binding enhances the intracellular domain affinity for Mg(2+) within physiological concentrations of this divalent cation, enabling MgtE to function as an in vivo Mg(2+) sensor (PubMed:28747715). ATP dissociation from MgtE upregulates Mg(2+) influx at both high and low intracellular Mg(2+) concentrations (PubMed:28747715).</text>
</comment>
<comment type="subunit">
    <text evidence="2 3 4 6">Homodimer.</text>
</comment>
<comment type="interaction">
    <interactant intactId="EBI-15652583">
        <id>Q5SMG8</id>
    </interactant>
    <interactant intactId="EBI-15652583">
        <id>Q5SMG8</id>
        <label>mgtE</label>
    </interactant>
    <organismsDiffer>false</organismsDiffer>
    <experiments>2</experiments>
</comment>
<comment type="subcellular location">
    <subcellularLocation>
        <location evidence="2 3 4">Cell inner membrane</location>
        <topology evidence="2 3 4">Multi-pass membrane protein</topology>
    </subcellularLocation>
</comment>
<comment type="similarity">
    <text evidence="8">Belongs to the SLC41A transporter family.</text>
</comment>
<sequence>MEEKLAVSLQEALQEGDTRALREVLEEIHPQDLLALWDELKGEHRYVVLTLLPKAKAAEVLSHLSPEEQAEYLKTLPPWRLREILEELSLDDLADALQAVRKEDPAYFQRLKDLLDPRTRAEVEALARYEEDEAGGLMTPEYVAVREGMTVEEVLRFLRRAAPDAETIYYIYVVDEKGRLKGVLSLRDLIVADPRTRVAEIMNPKVVYVRTDTDQEEVARLMADYDFTVLPVVDEEGRLVGIVTVDDVLDVLEAEATEDIHKLGAVDVPDLVYSEAGPVALWLARVRWLVILILTGMVTSSILQGFESVLEAVTALAFYVPVLLGTGGNTGNQSATLIIRALATRDLDLRDWRRVFLKEMGVGLLLGLTLSFLLVGKVYWDGHPLLLPVVGVSLVLIVFFANLVGAMLPFLLRRLGVDPALVSNPLVATLSDVTGLLIYLSVARLLLEAV</sequence>
<feature type="chain" id="PRO_0000363889" description="Magnesium transporter MgtE">
    <location>
        <begin position="1"/>
        <end position="450"/>
    </location>
</feature>
<feature type="topological domain" description="Cytoplasmic" evidence="2 4">
    <location>
        <begin position="1"/>
        <end position="283"/>
    </location>
</feature>
<feature type="transmembrane region" description="Helical" evidence="4 13 14 15">
    <location>
        <begin position="284"/>
        <end position="306"/>
    </location>
</feature>
<feature type="topological domain" description="Periplasmic" evidence="2 4">
    <location>
        <begin position="307"/>
        <end position="315"/>
    </location>
</feature>
<feature type="transmembrane region" description="Helical" evidence="4 13 14 15">
    <location>
        <begin position="316"/>
        <end position="337"/>
    </location>
</feature>
<feature type="topological domain" description="Cytoplasmic" evidence="2 4">
    <location>
        <begin position="338"/>
        <end position="351"/>
    </location>
</feature>
<feature type="transmembrane region" description="Helical" evidence="4 13 14 15">
    <location>
        <begin position="352"/>
        <end position="381"/>
    </location>
</feature>
<feature type="topological domain" description="Periplasmic" evidence="2 4">
    <location>
        <begin position="382"/>
        <end position="385"/>
    </location>
</feature>
<feature type="transmembrane region" description="Helical" evidence="4 13 14 15">
    <location>
        <begin position="386"/>
        <end position="409"/>
    </location>
</feature>
<feature type="topological domain" description="Cytoplasmic" evidence="2 4">
    <location>
        <begin position="410"/>
        <end position="420"/>
    </location>
</feature>
<feature type="transmembrane region" description="Helical" evidence="4 13 14 15">
    <location>
        <begin position="421"/>
        <end position="443"/>
    </location>
</feature>
<feature type="topological domain" description="Periplasmic" evidence="2 4">
    <location>
        <begin position="444"/>
        <end position="450"/>
    </location>
</feature>
<feature type="domain" description="CBS 1" evidence="1">
    <location>
        <begin position="138"/>
        <end position="200"/>
    </location>
</feature>
<feature type="domain" description="CBS 2" evidence="1">
    <location>
        <begin position="202"/>
        <end position="258"/>
    </location>
</feature>
<feature type="binding site" evidence="3 5">
    <location>
        <position position="59"/>
    </location>
    <ligand>
        <name>Mg(2+)</name>
        <dbReference type="ChEBI" id="CHEBI:18420"/>
        <label>1</label>
    </ligand>
</feature>
<feature type="binding site" evidence="3 5 12 16 17">
    <location>
        <position position="91"/>
    </location>
    <ligand>
        <name>Mg(2+)</name>
        <dbReference type="ChEBI" id="CHEBI:18420"/>
        <label>2</label>
    </ligand>
</feature>
<feature type="binding site" evidence="3 5 12 16 17">
    <location>
        <position position="95"/>
    </location>
    <ligand>
        <name>Mg(2+)</name>
        <dbReference type="ChEBI" id="CHEBI:18420"/>
        <label>3</label>
    </ligand>
</feature>
<feature type="binding site" evidence="3 5 12 16 17">
    <location>
        <position position="136"/>
    </location>
    <ligand>
        <name>Mg(2+)</name>
        <dbReference type="ChEBI" id="CHEBI:18420"/>
        <label>3</label>
    </ligand>
</feature>
<feature type="binding site" evidence="5 16 17">
    <location>
        <position position="170"/>
    </location>
    <ligand>
        <name>ATP</name>
        <dbReference type="ChEBI" id="CHEBI:30616"/>
    </ligand>
</feature>
<feature type="binding site" evidence="5 16 17">
    <location>
        <position position="185"/>
    </location>
    <ligand>
        <name>ATP</name>
        <dbReference type="ChEBI" id="CHEBI:30616"/>
    </ligand>
</feature>
<feature type="binding site" evidence="5 16 17">
    <location>
        <position position="187"/>
    </location>
    <ligand>
        <name>ATP</name>
        <dbReference type="ChEBI" id="CHEBI:30616"/>
    </ligand>
</feature>
<feature type="binding site" evidence="5 16 17">
    <location>
        <position position="188"/>
    </location>
    <ligand>
        <name>ATP</name>
        <dbReference type="ChEBI" id="CHEBI:30616"/>
    </ligand>
</feature>
<feature type="binding site" evidence="5 16 17">
    <location>
        <position position="207"/>
    </location>
    <ligand>
        <name>ATP</name>
        <dbReference type="ChEBI" id="CHEBI:30616"/>
    </ligand>
</feature>
<feature type="binding site" evidence="3 5">
    <location>
        <position position="216"/>
    </location>
    <ligand>
        <name>Mg(2+)</name>
        <dbReference type="ChEBI" id="CHEBI:18420"/>
        <label>4</label>
    </ligand>
</feature>
<feature type="binding site" evidence="3 5 12 17">
    <location>
        <position position="223"/>
    </location>
    <ligand>
        <name>Mg(2+)</name>
        <dbReference type="ChEBI" id="CHEBI:18420"/>
        <label>5</label>
    </ligand>
</feature>
<feature type="binding site" evidence="3 5">
    <location>
        <position position="226"/>
    </location>
    <ligand>
        <name>Mg(2+)</name>
        <dbReference type="ChEBI" id="CHEBI:18420"/>
        <label>1</label>
    </ligand>
</feature>
<feature type="binding site" evidence="3 5 12 17">
    <location>
        <position position="226"/>
    </location>
    <ligand>
        <name>Mg(2+)</name>
        <dbReference type="ChEBI" id="CHEBI:18420"/>
        <label>5</label>
    </ligand>
</feature>
<feature type="binding site" evidence="3 5 12 16 17">
    <location>
        <position position="247"/>
    </location>
    <ligand>
        <name>Mg(2+)</name>
        <dbReference type="ChEBI" id="CHEBI:18420"/>
        <label>2</label>
    </ligand>
</feature>
<feature type="binding site" evidence="3 5 12 17">
    <location>
        <position position="250"/>
    </location>
    <ligand>
        <name>Mg(2+)</name>
        <dbReference type="ChEBI" id="CHEBI:18420"/>
        <label>5</label>
    </ligand>
</feature>
<feature type="binding site" evidence="3 5">
    <location>
        <position position="255"/>
    </location>
    <ligand>
        <name>Mg(2+)</name>
        <dbReference type="ChEBI" id="CHEBI:18420"/>
        <label>4</label>
    </ligand>
</feature>
<feature type="binding site" evidence="3 5">
    <location>
        <position position="258"/>
    </location>
    <ligand>
        <name>Mg(2+)</name>
        <dbReference type="ChEBI" id="CHEBI:18420"/>
        <label>6</label>
    </ligand>
</feature>
<feature type="binding site" evidence="3 5 12">
    <location>
        <position position="259"/>
    </location>
    <ligand>
        <name>Mg(2+)</name>
        <dbReference type="ChEBI" id="CHEBI:18420"/>
        <label>6</label>
    </ligand>
</feature>
<feature type="binding site" evidence="4 15">
    <location>
        <position position="275"/>
    </location>
    <ligand>
        <name>Ca(2+)</name>
        <dbReference type="ChEBI" id="CHEBI:29108"/>
    </ligand>
</feature>
<feature type="binding site" evidence="4 14">
    <location>
        <position position="275"/>
    </location>
    <ligand>
        <name>Mn(2+)</name>
        <dbReference type="ChEBI" id="CHEBI:29035"/>
        <label>1</label>
        <note>inhibitor</note>
    </ligand>
</feature>
<feature type="binding site" evidence="4 14">
    <location>
        <position position="304"/>
    </location>
    <ligand>
        <name>Mn(2+)</name>
        <dbReference type="ChEBI" id="CHEBI:29035"/>
        <label>2</label>
        <note>inhibitor</note>
    </ligand>
</feature>
<feature type="binding site" evidence="4 14">
    <location>
        <position position="307"/>
    </location>
    <ligand>
        <name>Mn(2+)</name>
        <dbReference type="ChEBI" id="CHEBI:29035"/>
        <label>2</label>
        <note>inhibitor</note>
    </ligand>
</feature>
<feature type="binding site" evidence="4 15">
    <location>
        <position position="311"/>
    </location>
    <ligand>
        <name>Ca(2+)</name>
        <dbReference type="ChEBI" id="CHEBI:29108"/>
    </ligand>
</feature>
<feature type="binding site" evidence="4 14">
    <location>
        <position position="311"/>
    </location>
    <ligand>
        <name>Mn(2+)</name>
        <dbReference type="ChEBI" id="CHEBI:29035"/>
        <label>1</label>
        <note>inhibitor</note>
    </ligand>
</feature>
<feature type="binding site" evidence="4 14">
    <location>
        <position position="383"/>
    </location>
    <ligand>
        <name>Mn(2+)</name>
        <dbReference type="ChEBI" id="CHEBI:29035"/>
        <label>2</label>
        <note>inhibitor</note>
    </ligand>
</feature>
<feature type="binding site" evidence="3 5 12">
    <location>
        <position position="418"/>
    </location>
    <ligand>
        <name>Mg(2+)</name>
        <dbReference type="ChEBI" id="CHEBI:18420"/>
        <label>6</label>
    </ligand>
</feature>
<feature type="binding site" evidence="3">
    <location>
        <position position="428"/>
    </location>
    <ligand>
        <name>Mg(2+)</name>
        <dbReference type="ChEBI" id="CHEBI:18420"/>
        <label>7</label>
    </ligand>
</feature>
<feature type="binding site" evidence="3 5">
    <location>
        <position position="432"/>
    </location>
    <ligand>
        <name>Mg(2+)</name>
        <dbReference type="ChEBI" id="CHEBI:18420"/>
        <label>7</label>
    </ligand>
</feature>
<feature type="mutagenesis site" description="Still possesses a slight channel activity." evidence="3">
    <original>E</original>
    <variation>A</variation>
    <location>
        <position position="59"/>
    </location>
</feature>
<feature type="mutagenesis site" description="Decreases ATP binding." evidence="5">
    <original>R</original>
    <variation>E</variation>
    <location>
        <position position="187"/>
    </location>
</feature>
<feature type="mutagenesis site" description="Abolishes the Mg(2+)-dependent suppression of the Mg(2+) influx; when associated with A-250." evidence="3">
    <original>D</original>
    <variation>N</variation>
    <location>
        <position position="226"/>
    </location>
</feature>
<feature type="mutagenesis site" description="Cannot bind ATP." evidence="5">
    <original>F</original>
    <variation>A</variation>
    <location>
        <position position="227"/>
    </location>
</feature>
<feature type="mutagenesis site" description="Abolishes the Mg(2+)-dependent suppression of the Mg(2+) influx; when associated with N-226." evidence="3">
    <original>D</original>
    <variation>A</variation>
    <location>
        <position position="250"/>
    </location>
</feature>
<feature type="mutagenesis site" description="Abolishes the Mg(2+)-dependent suppression of the Mg(2+) influx." evidence="3">
    <original>E</original>
    <variation>Q</variation>
    <location>
        <position position="258"/>
    </location>
</feature>
<feature type="mutagenesis site" description="Abolishes the Mg(2+)-dependent suppression of the Mg(2+) influx." evidence="3">
    <original>D</original>
    <variation>N</variation>
    <location>
        <position position="259"/>
    </location>
</feature>
<feature type="mutagenesis site" description="Abolishes Mg(2+)-transport activity." evidence="3">
    <original>R</original>
    <variation>A</variation>
    <location>
        <position position="285"/>
    </location>
</feature>
<feature type="mutagenesis site" description="Does not affect Mg(2+) transport, but increases permeability for Mn(2+); when associated with A-307 and A-383." evidence="4">
    <original>Q</original>
    <variation>A</variation>
    <location>
        <position position="304"/>
    </location>
</feature>
<feature type="mutagenesis site" description="Does not affect Mg(2+) transport, but increases permeability for Mn(2+); when associated with A-304 and A-383." evidence="4">
    <original>E</original>
    <variation>A</variation>
    <location>
        <position position="307"/>
    </location>
</feature>
<feature type="mutagenesis site" description="Does not affect Mg(2+) transport, but increases permeability for Mn(2+) and Ca(2+)." evidence="4">
    <original>E</original>
    <variation>A</variation>
    <location>
        <position position="311"/>
    </location>
</feature>
<feature type="mutagenesis site" description="Abolishes Mg(2+)-transport activity." evidence="3">
    <original>F</original>
    <variation>A</variation>
    <location>
        <position position="318"/>
    </location>
</feature>
<feature type="mutagenesis site" description="Abolishes Mg(2+)-transport activity." evidence="3">
    <original>P</original>
    <variation>A</variation>
    <location>
        <position position="321"/>
    </location>
</feature>
<feature type="mutagenesis site" description="Abolishes Mg(2+)-transport activity." evidence="3">
    <original>L</original>
    <variation>A</variation>
    <location>
        <position position="324"/>
    </location>
</feature>
<feature type="mutagenesis site" description="Loss of channel activity." evidence="6">
    <original>G</original>
    <variation>A</variation>
    <location>
        <position position="325"/>
    </location>
</feature>
<feature type="mutagenesis site" description="Loss of channel activity." evidence="6">
    <original>G</original>
    <variation>A</variation>
    <location>
        <position position="328"/>
    </location>
</feature>
<feature type="mutagenesis site" description="Abolishes Mg(2+)-transport activity." evidence="3">
    <original>N</original>
    <variation>A</variation>
    <location>
        <position position="329"/>
    </location>
</feature>
<feature type="mutagenesis site" description="Does not affect activity. Increases Ni(2+) sensitivity." evidence="3 6">
    <original>N</original>
    <variation>A</variation>
    <location>
        <position position="332"/>
    </location>
</feature>
<feature type="mutagenesis site" description="Abolishes Mg(2+)-transport activity." evidence="3">
    <original>Q</original>
    <variation>A</variation>
    <location>
        <position position="333"/>
    </location>
</feature>
<feature type="mutagenesis site" description="Abolishes Mg(2+)-transport activity." evidence="3">
    <original>E</original>
    <variation>A</variation>
    <location>
        <position position="359"/>
    </location>
</feature>
<feature type="mutagenesis site" description="Does not affect Mg(2+) transport, but increases permeability for Mn(2+); when associated with A-304 and A-307." evidence="4">
    <original>H</original>
    <variation>A</variation>
    <location>
        <position position="383"/>
    </location>
</feature>
<feature type="mutagenesis site" description="Does not affect activity. Increases Ni(2+) sensitivity." evidence="3 6">
    <original>N</original>
    <variation>A</variation>
    <location>
        <position position="424"/>
    </location>
</feature>
<feature type="mutagenesis site" description="Abolishes Mg(2+)-transport activity." evidence="3 4">
    <original>D</original>
    <variation>A</variation>
    <variation>N</variation>
    <location>
        <position position="432"/>
    </location>
</feature>
<feature type="mutagenesis site" description="Loss of channel activity." evidence="6">
    <original>G</original>
    <variation>A</variation>
    <location>
        <position position="435"/>
    </location>
</feature>
<feature type="turn" evidence="20">
    <location>
        <begin position="7"/>
        <end position="9"/>
    </location>
</feature>
<feature type="helix" evidence="20">
    <location>
        <begin position="10"/>
        <end position="15"/>
    </location>
</feature>
<feature type="helix" evidence="20">
    <location>
        <begin position="18"/>
        <end position="27"/>
    </location>
</feature>
<feature type="helix" evidence="20">
    <location>
        <begin position="30"/>
        <end position="35"/>
    </location>
</feature>
<feature type="helix" evidence="20">
    <location>
        <begin position="36"/>
        <end position="39"/>
    </location>
</feature>
<feature type="helix" evidence="20">
    <location>
        <begin position="42"/>
        <end position="51"/>
    </location>
</feature>
<feature type="helix" evidence="20">
    <location>
        <begin position="54"/>
        <end position="62"/>
    </location>
</feature>
<feature type="helix" evidence="20">
    <location>
        <begin position="66"/>
        <end position="75"/>
    </location>
</feature>
<feature type="helix" evidence="20">
    <location>
        <begin position="78"/>
        <end position="87"/>
    </location>
</feature>
<feature type="helix" evidence="20">
    <location>
        <begin position="90"/>
        <end position="103"/>
    </location>
</feature>
<feature type="helix" evidence="20">
    <location>
        <begin position="105"/>
        <end position="114"/>
    </location>
</feature>
<feature type="helix" evidence="20">
    <location>
        <begin position="117"/>
        <end position="128"/>
    </location>
</feature>
<feature type="helix" evidence="20">
    <location>
        <begin position="134"/>
        <end position="136"/>
    </location>
</feature>
<feature type="strand" evidence="21">
    <location>
        <begin position="142"/>
        <end position="145"/>
    </location>
</feature>
<feature type="helix" evidence="20">
    <location>
        <begin position="151"/>
        <end position="161"/>
    </location>
</feature>
<feature type="turn" evidence="20">
    <location>
        <begin position="162"/>
        <end position="164"/>
    </location>
</feature>
<feature type="strand" evidence="20">
    <location>
        <begin position="168"/>
        <end position="174"/>
    </location>
</feature>
<feature type="strand" evidence="20">
    <location>
        <begin position="179"/>
        <end position="185"/>
    </location>
</feature>
<feature type="helix" evidence="20">
    <location>
        <begin position="186"/>
        <end position="191"/>
    </location>
</feature>
<feature type="turn" evidence="20">
    <location>
        <begin position="199"/>
        <end position="201"/>
    </location>
</feature>
<feature type="strand" evidence="20">
    <location>
        <begin position="202"/>
        <end position="205"/>
    </location>
</feature>
<feature type="strand" evidence="21">
    <location>
        <begin position="209"/>
        <end position="214"/>
    </location>
</feature>
<feature type="helix" evidence="20">
    <location>
        <begin position="215"/>
        <end position="225"/>
    </location>
</feature>
<feature type="strand" evidence="20">
    <location>
        <begin position="228"/>
        <end position="233"/>
    </location>
</feature>
<feature type="strand" evidence="20">
    <location>
        <begin position="237"/>
        <end position="244"/>
    </location>
</feature>
<feature type="helix" evidence="20">
    <location>
        <begin position="245"/>
        <end position="251"/>
    </location>
</feature>
<feature type="strand" evidence="19">
    <location>
        <begin position="263"/>
        <end position="265"/>
    </location>
</feature>
<feature type="turn" evidence="22">
    <location>
        <begin position="273"/>
        <end position="275"/>
    </location>
</feature>
<feature type="helix" evidence="22">
    <location>
        <begin position="278"/>
        <end position="296"/>
    </location>
</feature>
<feature type="helix" evidence="22">
    <location>
        <begin position="298"/>
        <end position="304"/>
    </location>
</feature>
<feature type="helix" evidence="22">
    <location>
        <begin position="307"/>
        <end position="312"/>
    </location>
</feature>
<feature type="helix" evidence="22">
    <location>
        <begin position="314"/>
        <end position="319"/>
    </location>
</feature>
<feature type="helix" evidence="22">
    <location>
        <begin position="320"/>
        <end position="343"/>
    </location>
</feature>
<feature type="helix" evidence="22">
    <location>
        <begin position="349"/>
        <end position="351"/>
    </location>
</feature>
<feature type="helix" evidence="22">
    <location>
        <begin position="352"/>
        <end position="381"/>
    </location>
</feature>
<feature type="helix" evidence="22">
    <location>
        <begin position="384"/>
        <end position="386"/>
    </location>
</feature>
<feature type="helix" evidence="22">
    <location>
        <begin position="387"/>
        <end position="414"/>
    </location>
</feature>
<feature type="helix" evidence="22">
    <location>
        <begin position="419"/>
        <end position="421"/>
    </location>
</feature>
<feature type="helix" evidence="22">
    <location>
        <begin position="423"/>
        <end position="447"/>
    </location>
</feature>
<evidence type="ECO:0000255" key="1">
    <source>
        <dbReference type="PROSITE-ProRule" id="PRU00703"/>
    </source>
</evidence>
<evidence type="ECO:0000269" key="2">
    <source>
    </source>
</evidence>
<evidence type="ECO:0000269" key="3">
    <source>
    </source>
</evidence>
<evidence type="ECO:0000269" key="4">
    <source>
    </source>
</evidence>
<evidence type="ECO:0000269" key="5">
    <source>
    </source>
</evidence>
<evidence type="ECO:0000269" key="6">
    <source>
    </source>
</evidence>
<evidence type="ECO:0000303" key="7">
    <source>
    </source>
</evidence>
<evidence type="ECO:0000305" key="8"/>
<evidence type="ECO:0007744" key="9">
    <source>
        <dbReference type="PDB" id="2YVX"/>
    </source>
</evidence>
<evidence type="ECO:0007744" key="10">
    <source>
        <dbReference type="PDB" id="2YVY"/>
    </source>
</evidence>
<evidence type="ECO:0007744" key="11">
    <source>
        <dbReference type="PDB" id="2YVZ"/>
    </source>
</evidence>
<evidence type="ECO:0007744" key="12">
    <source>
        <dbReference type="PDB" id="2ZY9"/>
    </source>
</evidence>
<evidence type="ECO:0007744" key="13">
    <source>
        <dbReference type="PDB" id="4U9L"/>
    </source>
</evidence>
<evidence type="ECO:0007744" key="14">
    <source>
        <dbReference type="PDB" id="4U9N"/>
    </source>
</evidence>
<evidence type="ECO:0007744" key="15">
    <source>
        <dbReference type="PDB" id="4WIB"/>
    </source>
</evidence>
<evidence type="ECO:0007744" key="16">
    <source>
        <dbReference type="PDB" id="5X9G"/>
    </source>
</evidence>
<evidence type="ECO:0007744" key="17">
    <source>
        <dbReference type="PDB" id="5X9H"/>
    </source>
</evidence>
<evidence type="ECO:0007744" key="18">
    <source>
        <dbReference type="PDB" id="6LBH"/>
    </source>
</evidence>
<evidence type="ECO:0007829" key="19">
    <source>
        <dbReference type="PDB" id="2YVX"/>
    </source>
</evidence>
<evidence type="ECO:0007829" key="20">
    <source>
        <dbReference type="PDB" id="2YVY"/>
    </source>
</evidence>
<evidence type="ECO:0007829" key="21">
    <source>
        <dbReference type="PDB" id="2ZY9"/>
    </source>
</evidence>
<evidence type="ECO:0007829" key="22">
    <source>
        <dbReference type="PDB" id="4U9N"/>
    </source>
</evidence>
<organism>
    <name type="scientific">Thermus thermophilus (strain ATCC 27634 / DSM 579 / HB8)</name>
    <dbReference type="NCBI Taxonomy" id="300852"/>
    <lineage>
        <taxon>Bacteria</taxon>
        <taxon>Thermotogati</taxon>
        <taxon>Deinococcota</taxon>
        <taxon>Deinococci</taxon>
        <taxon>Thermales</taxon>
        <taxon>Thermaceae</taxon>
        <taxon>Thermus</taxon>
    </lineage>
</organism>
<reference key="1">
    <citation type="submission" date="2004-11" db="EMBL/GenBank/DDBJ databases">
        <title>Complete genome sequence of Thermus thermophilus HB8.</title>
        <authorList>
            <person name="Masui R."/>
            <person name="Kurokawa K."/>
            <person name="Nakagawa N."/>
            <person name="Tokunaga F."/>
            <person name="Koyama Y."/>
            <person name="Shibata T."/>
            <person name="Oshima T."/>
            <person name="Yokoyama S."/>
            <person name="Yasunaga T."/>
            <person name="Kuramitsu S."/>
        </authorList>
    </citation>
    <scope>NUCLEOTIDE SEQUENCE [LARGE SCALE GENOMIC DNA]</scope>
    <source>
        <strain>ATCC 27634 / DSM 579 / HB8</strain>
    </source>
</reference>
<reference evidence="9 10 11" key="2">
    <citation type="journal article" date="2007" name="Nature">
        <title>Crystal structure of the MgtE Mg(2+) transporter.</title>
        <authorList>
            <person name="Hattori M."/>
            <person name="Tanaka Y."/>
            <person name="Fukai S."/>
            <person name="Ishitani R."/>
            <person name="Nureki O."/>
        </authorList>
    </citation>
    <scope>X-RAY CRYSTALLOGRAPHY (3.50 ANGSTROMS) OF FULL-LENGTH PROTEIN IN COMPLEX WITH MG(2+) AND OF THE CYTOSOLIC N-TERMINAL DOMAIN</scope>
    <scope>FUNCTION</scope>
    <scope>CATALYTIC ACTIVITY</scope>
    <scope>SUBUNIT</scope>
    <scope>SUBCELLULAR LOCATION</scope>
    <scope>TOPOLOGY</scope>
</reference>
<reference evidence="12" key="3">
    <citation type="journal article" date="2009" name="EMBO J.">
        <title>Mg(2+)-dependent gating of bacterial MgtE channel underlies Mg(2+) homeostasis.</title>
        <authorList>
            <person name="Hattori M."/>
            <person name="Iwase N."/>
            <person name="Furuya N."/>
            <person name="Tanaka Y."/>
            <person name="Tsukazaki T."/>
            <person name="Ishitani R."/>
            <person name="Maguire M.E."/>
            <person name="Ito K."/>
            <person name="Maturana A."/>
            <person name="Nureki O."/>
        </authorList>
    </citation>
    <scope>X-RAY CRYSTALLOGRAPHY (2.94 ANGSTROMS) IN COMPLEX WITH MG(2+)</scope>
    <scope>FUNCTION</scope>
    <scope>CATALYTIC ACTIVITY</scope>
    <scope>ACTIVITY REGULATION</scope>
    <scope>SUBUNIT</scope>
    <scope>SUBCELLULAR LOCATION</scope>
    <scope>MUTAGENESIS OF GLU-59; ASP-226; ASP-250; GLU-258; ASP-259; ARG-285; PHE-318; PRO-321; LEU-324; ASN-329; ASN-332; GLN-333; GLU-359; ASN-424 AND ASP-432</scope>
</reference>
<reference evidence="13 14 15" key="4">
    <citation type="journal article" date="2014" name="Nat. Commun.">
        <title>Structural basis for ion selectivity revealed by high-resolution crystal structure of Mg2+ channel MgtE.</title>
        <authorList>
            <person name="Takeda H."/>
            <person name="Hattori M."/>
            <person name="Nishizawa T."/>
            <person name="Yamashita K."/>
            <person name="Shah S.T."/>
            <person name="Caffrey M."/>
            <person name="Maturana A.D."/>
            <person name="Ishitani R."/>
            <person name="Nureki O."/>
        </authorList>
    </citation>
    <scope>X-RAY CRYSTALLOGRAPHY (2.20 ANGSTROMS) OF 271-448 IN COMPLEXES WITH MG(2+); CA(2+) AND MN(2+)</scope>
    <scope>FUNCTION</scope>
    <scope>CATALYTIC ACTIVITY</scope>
    <scope>ACTIVITY REGULATION</scope>
    <scope>SUBUNIT</scope>
    <scope>SUBCELLULAR LOCATION</scope>
    <scope>TOPOLOGY</scope>
    <scope>MUTAGENESIS OF GLN-304; GLU-307; GLU-311; HIS-383 AND ASP-432</scope>
</reference>
<reference evidence="16 17" key="5">
    <citation type="journal article" date="2017" name="Nat. Commun.">
        <title>ATP-dependent modulation of MgtE in Mg2+ homeostasis.</title>
        <authorList>
            <person name="Tomita A."/>
            <person name="Zhang M."/>
            <person name="Jin F."/>
            <person name="Zhuang W."/>
            <person name="Takeda H."/>
            <person name="Maruyama T."/>
            <person name="Osawa M."/>
            <person name="Hashimoto K.I."/>
            <person name="Kawasaki H."/>
            <person name="Ito K."/>
            <person name="Dohmae N."/>
            <person name="Ishitani R."/>
            <person name="Shimada I."/>
            <person name="Yan Z."/>
            <person name="Hattori M."/>
            <person name="Nureki O."/>
        </authorList>
    </citation>
    <scope>X-RAY CRYSTALLOGRAPHY (3.00 ANGSTROMS) OF 1-275 IN COMPLEXES WITH ATP AND MG(2+)</scope>
    <scope>ACTIVITY REGULATION</scope>
    <scope>MUTAGENESIS OF ARG-187 AND PHE-227</scope>
</reference>
<reference evidence="18" key="6">
    <citation type="journal article" date="2021" name="PLoS Biol.">
        <title>The structure of MgtE in the absence of magnesium provides new insights into channel gating.</title>
        <authorList>
            <person name="Jin F."/>
            <person name="Sun M."/>
            <person name="Fujii T."/>
            <person name="Yamada Y."/>
            <person name="Wang J."/>
            <person name="Maturana A.D."/>
            <person name="Wada M."/>
            <person name="Su S."/>
            <person name="Ma J."/>
            <person name="Takeda H."/>
            <person name="Kusakizako T."/>
            <person name="Tomita A."/>
            <person name="Nakada-Nakura Y."/>
            <person name="Liu K."/>
            <person name="Uemura T."/>
            <person name="Nomura Y."/>
            <person name="Nomura N."/>
            <person name="Ito K."/>
            <person name="Nureki O."/>
            <person name="Namba K."/>
            <person name="Iwata S."/>
            <person name="Yu Y."/>
            <person name="Hattori M."/>
        </authorList>
    </citation>
    <scope>STRUCTURE BY ELECTRON MICROSCOPY (3.70 ANGSTROMS) OF 271-448</scope>
    <scope>FUNCTION</scope>
    <scope>CATALYTIC ACTIVITY</scope>
    <scope>TRANSPORT MECHANISM</scope>
    <scope>ACTIVITY REGULATION</scope>
    <scope>SUBUNIT</scope>
    <scope>MUTAGENESIS OF GLY-325; GLY-328; ASN-332; ASN-424 AND GLY-435</scope>
</reference>
<dbReference type="EMBL" id="AP008226">
    <property type="protein sequence ID" value="BAD70883.1"/>
    <property type="molecule type" value="Genomic_DNA"/>
</dbReference>
<dbReference type="RefSeq" id="WP_011228410.1">
    <property type="nucleotide sequence ID" value="NC_006461.1"/>
</dbReference>
<dbReference type="RefSeq" id="YP_144326.1">
    <property type="nucleotide sequence ID" value="NC_006461.1"/>
</dbReference>
<dbReference type="PDB" id="2YVX">
    <property type="method" value="X-ray"/>
    <property type="resolution" value="3.50 A"/>
    <property type="chains" value="A/B/C/D=1-450"/>
</dbReference>
<dbReference type="PDB" id="2YVY">
    <property type="method" value="X-ray"/>
    <property type="resolution" value="2.30 A"/>
    <property type="chains" value="A=1-275"/>
</dbReference>
<dbReference type="PDB" id="2YVZ">
    <property type="method" value="X-ray"/>
    <property type="resolution" value="3.90 A"/>
    <property type="chains" value="A/B=1-275"/>
</dbReference>
<dbReference type="PDB" id="2ZY9">
    <property type="method" value="X-ray"/>
    <property type="resolution" value="2.94 A"/>
    <property type="chains" value="A/B=1-450"/>
</dbReference>
<dbReference type="PDB" id="4U9L">
    <property type="method" value="X-ray"/>
    <property type="resolution" value="2.30 A"/>
    <property type="chains" value="A/B=271-449"/>
</dbReference>
<dbReference type="PDB" id="4U9N">
    <property type="method" value="X-ray"/>
    <property type="resolution" value="2.20 A"/>
    <property type="chains" value="A/B=271-448"/>
</dbReference>
<dbReference type="PDB" id="4WIB">
    <property type="method" value="X-ray"/>
    <property type="resolution" value="3.20 A"/>
    <property type="chains" value="A/B=271-448"/>
</dbReference>
<dbReference type="PDB" id="5X9G">
    <property type="method" value="X-ray"/>
    <property type="resolution" value="3.00 A"/>
    <property type="chains" value="A/B/C/D=1-275"/>
</dbReference>
<dbReference type="PDB" id="5X9H">
    <property type="method" value="X-ray"/>
    <property type="resolution" value="3.60 A"/>
    <property type="chains" value="A/B=1-450"/>
</dbReference>
<dbReference type="PDB" id="6LBH">
    <property type="method" value="EM"/>
    <property type="resolution" value="3.70 A"/>
    <property type="chains" value="A/B=271-448"/>
</dbReference>
<dbReference type="PDB" id="8H5E">
    <property type="method" value="X-ray"/>
    <property type="resolution" value="2.50 A"/>
    <property type="chains" value="A/B=268-450"/>
</dbReference>
<dbReference type="PDBsum" id="2YVX"/>
<dbReference type="PDBsum" id="2YVY"/>
<dbReference type="PDBsum" id="2YVZ"/>
<dbReference type="PDBsum" id="2ZY9"/>
<dbReference type="PDBsum" id="4U9L"/>
<dbReference type="PDBsum" id="4U9N"/>
<dbReference type="PDBsum" id="4WIB"/>
<dbReference type="PDBsum" id="5X9G"/>
<dbReference type="PDBsum" id="5X9H"/>
<dbReference type="PDBsum" id="6LBH"/>
<dbReference type="PDBsum" id="8H5E"/>
<dbReference type="EMDB" id="EMD-0869"/>
<dbReference type="SMR" id="Q5SMG8"/>
<dbReference type="DIP" id="DIP-60248N"/>
<dbReference type="TCDB" id="1.A.26.1.2">
    <property type="family name" value="the mg(2+) transporter-e (mgte) family"/>
</dbReference>
<dbReference type="EnsemblBacteria" id="BAD70883">
    <property type="protein sequence ID" value="BAD70883"/>
    <property type="gene ID" value="BAD70883"/>
</dbReference>
<dbReference type="GeneID" id="3168925"/>
<dbReference type="KEGG" id="ttj:TTHA1060"/>
<dbReference type="PATRIC" id="fig|300852.9.peg.1040"/>
<dbReference type="eggNOG" id="COG2239">
    <property type="taxonomic scope" value="Bacteria"/>
</dbReference>
<dbReference type="HOGENOM" id="CLU_037408_2_2_0"/>
<dbReference type="PhylomeDB" id="Q5SMG8"/>
<dbReference type="BRENDA" id="7.2.2.14">
    <property type="organism ID" value="2305"/>
</dbReference>
<dbReference type="EvolutionaryTrace" id="Q5SMG8"/>
<dbReference type="Proteomes" id="UP000000532">
    <property type="component" value="Chromosome"/>
</dbReference>
<dbReference type="GO" id="GO:0005886">
    <property type="term" value="C:plasma membrane"/>
    <property type="evidence" value="ECO:0007669"/>
    <property type="project" value="UniProtKB-SubCell"/>
</dbReference>
<dbReference type="GO" id="GO:0042802">
    <property type="term" value="F:identical protein binding"/>
    <property type="evidence" value="ECO:0000353"/>
    <property type="project" value="IntAct"/>
</dbReference>
<dbReference type="GO" id="GO:0000287">
    <property type="term" value="F:magnesium ion binding"/>
    <property type="evidence" value="ECO:0000314"/>
    <property type="project" value="UniProtKB"/>
</dbReference>
<dbReference type="GO" id="GO:0015095">
    <property type="term" value="F:magnesium ion transmembrane transporter activity"/>
    <property type="evidence" value="ECO:0007669"/>
    <property type="project" value="InterPro"/>
</dbReference>
<dbReference type="GO" id="GO:0042803">
    <property type="term" value="F:protein homodimerization activity"/>
    <property type="evidence" value="ECO:0000353"/>
    <property type="project" value="UniProtKB"/>
</dbReference>
<dbReference type="GO" id="GO:0015693">
    <property type="term" value="P:magnesium ion transport"/>
    <property type="evidence" value="ECO:0000303"/>
    <property type="project" value="UniProtKB"/>
</dbReference>
<dbReference type="CDD" id="cd04606">
    <property type="entry name" value="CBS_pair_Mg_transporter"/>
    <property type="match status" value="1"/>
</dbReference>
<dbReference type="FunFam" id="1.10.357.20:FF:000014">
    <property type="entry name" value="Magnesium transporter MgtE"/>
    <property type="match status" value="1"/>
</dbReference>
<dbReference type="FunFam" id="3.10.580.10:FF:000025">
    <property type="entry name" value="Magnesium transporter MgtE"/>
    <property type="match status" value="1"/>
</dbReference>
<dbReference type="Gene3D" id="3.10.580.10">
    <property type="entry name" value="CBS-domain"/>
    <property type="match status" value="1"/>
</dbReference>
<dbReference type="Gene3D" id="1.25.60.10">
    <property type="entry name" value="MgtE N-terminal domain-like"/>
    <property type="match status" value="1"/>
</dbReference>
<dbReference type="Gene3D" id="1.10.357.20">
    <property type="entry name" value="SLC41 divalent cation transporters, integral membrane domain"/>
    <property type="match status" value="1"/>
</dbReference>
<dbReference type="InterPro" id="IPR000644">
    <property type="entry name" value="CBS_dom"/>
</dbReference>
<dbReference type="InterPro" id="IPR046342">
    <property type="entry name" value="CBS_dom_sf"/>
</dbReference>
<dbReference type="InterPro" id="IPR006668">
    <property type="entry name" value="Mg_transptr_MgtE_intracell_dom"/>
</dbReference>
<dbReference type="InterPro" id="IPR038076">
    <property type="entry name" value="MgtE_N_sf"/>
</dbReference>
<dbReference type="InterPro" id="IPR006669">
    <property type="entry name" value="MgtE_transporter"/>
</dbReference>
<dbReference type="InterPro" id="IPR006667">
    <property type="entry name" value="SLC41_membr_dom"/>
</dbReference>
<dbReference type="InterPro" id="IPR036739">
    <property type="entry name" value="SLC41_membr_dom_sf"/>
</dbReference>
<dbReference type="NCBIfam" id="TIGR00400">
    <property type="entry name" value="mgtE"/>
    <property type="match status" value="1"/>
</dbReference>
<dbReference type="PANTHER" id="PTHR43773">
    <property type="entry name" value="MAGNESIUM TRANSPORTER MGTE"/>
    <property type="match status" value="1"/>
</dbReference>
<dbReference type="PANTHER" id="PTHR43773:SF1">
    <property type="entry name" value="MAGNESIUM TRANSPORTER MGTE"/>
    <property type="match status" value="1"/>
</dbReference>
<dbReference type="Pfam" id="PF00571">
    <property type="entry name" value="CBS"/>
    <property type="match status" value="2"/>
</dbReference>
<dbReference type="Pfam" id="PF01769">
    <property type="entry name" value="MgtE"/>
    <property type="match status" value="1"/>
</dbReference>
<dbReference type="Pfam" id="PF03448">
    <property type="entry name" value="MgtE_N"/>
    <property type="match status" value="1"/>
</dbReference>
<dbReference type="SMART" id="SM00116">
    <property type="entry name" value="CBS"/>
    <property type="match status" value="2"/>
</dbReference>
<dbReference type="SMART" id="SM00924">
    <property type="entry name" value="MgtE_N"/>
    <property type="match status" value="1"/>
</dbReference>
<dbReference type="SUPFAM" id="SSF54631">
    <property type="entry name" value="CBS-domain pair"/>
    <property type="match status" value="1"/>
</dbReference>
<dbReference type="SUPFAM" id="SSF161093">
    <property type="entry name" value="MgtE membrane domain-like"/>
    <property type="match status" value="1"/>
</dbReference>
<dbReference type="SUPFAM" id="SSF158791">
    <property type="entry name" value="MgtE N-terminal domain-like"/>
    <property type="match status" value="1"/>
</dbReference>
<dbReference type="PROSITE" id="PS51371">
    <property type="entry name" value="CBS"/>
    <property type="match status" value="2"/>
</dbReference>
<keyword id="KW-0002">3D-structure</keyword>
<keyword id="KW-0106">Calcium</keyword>
<keyword id="KW-0129">CBS domain</keyword>
<keyword id="KW-0997">Cell inner membrane</keyword>
<keyword id="KW-1003">Cell membrane</keyword>
<keyword id="KW-0460">Magnesium</keyword>
<keyword id="KW-0464">Manganese</keyword>
<keyword id="KW-0472">Membrane</keyword>
<keyword id="KW-0479">Metal-binding</keyword>
<keyword id="KW-1185">Reference proteome</keyword>
<keyword id="KW-0677">Repeat</keyword>
<keyword id="KW-0812">Transmembrane</keyword>
<keyword id="KW-1133">Transmembrane helix</keyword>
<keyword id="KW-0813">Transport</keyword>
<proteinExistence type="evidence at protein level"/>
<gene>
    <name evidence="7" type="primary">mgtE</name>
    <name type="ordered locus">TTHA1060</name>
</gene>
<protein>
    <recommendedName>
        <fullName evidence="8">Magnesium transporter MgtE</fullName>
    </recommendedName>
</protein>
<accession>Q5SMG8</accession>
<name>MGTE_THET8</name>